<reference key="1">
    <citation type="journal article" date="1999" name="Science">
        <title>Genome sequence of the radioresistant bacterium Deinococcus radiodurans R1.</title>
        <authorList>
            <person name="White O."/>
            <person name="Eisen J.A."/>
            <person name="Heidelberg J.F."/>
            <person name="Hickey E.K."/>
            <person name="Peterson J.D."/>
            <person name="Dodson R.J."/>
            <person name="Haft D.H."/>
            <person name="Gwinn M.L."/>
            <person name="Nelson W.C."/>
            <person name="Richardson D.L."/>
            <person name="Moffat K.S."/>
            <person name="Qin H."/>
            <person name="Jiang L."/>
            <person name="Pamphile W."/>
            <person name="Crosby M."/>
            <person name="Shen M."/>
            <person name="Vamathevan J.J."/>
            <person name="Lam P."/>
            <person name="McDonald L.A."/>
            <person name="Utterback T.R."/>
            <person name="Zalewski C."/>
            <person name="Makarova K.S."/>
            <person name="Aravind L."/>
            <person name="Daly M.J."/>
            <person name="Minton K.W."/>
            <person name="Fleischmann R.D."/>
            <person name="Ketchum K.A."/>
            <person name="Nelson K.E."/>
            <person name="Salzberg S.L."/>
            <person name="Smith H.O."/>
            <person name="Venter J.C."/>
            <person name="Fraser C.M."/>
        </authorList>
    </citation>
    <scope>NUCLEOTIDE SEQUENCE [LARGE SCALE GENOMIC DNA]</scope>
    <source>
        <strain>ATCC 13939 / DSM 20539 / JCM 16871 / CCUG 27074 / LMG 4051 / NBRC 15346 / NCIMB 9279 / VKM B-1422 / R1</strain>
    </source>
</reference>
<feature type="chain" id="PRO_0000223765" description="Acetyl-coenzyme A carboxylase carboxyl transferase subunit alpha">
    <location>
        <begin position="1"/>
        <end position="316"/>
    </location>
</feature>
<feature type="domain" description="CoA carboxyltransferase C-terminal" evidence="2">
    <location>
        <begin position="36"/>
        <end position="290"/>
    </location>
</feature>
<sequence>MTSTPADALRELEARVRDLEATAERTGQNLDAALAPLRTQLETLRREHAAGLSRWDRVQLARTPGRPTALDYVDRLCSDWTELHGDRRFGDDPALIGGPARWQGRPVMLLLQQKGRDTKTKIKRRFGSANPEGYRKAIRLMDLADRFGLPVVSLIDTQGAYPGLEAEERGQGWAIAESIQRMVRLRVPAVCAVIGEGGSGGALAIGVGNRVLIQENAWYSVISPEGAASILWRDAAQAPLAAEALRVTAADLLDMGIVEEVVPEPPGGAHLDMDAAAEALGSVISRHLDDLSALTPDDLLAQRAARFRSLGAFEER</sequence>
<dbReference type="EC" id="2.1.3.15" evidence="1"/>
<dbReference type="EMBL" id="AE000513">
    <property type="protein sequence ID" value="AAF10787.1"/>
    <property type="molecule type" value="Genomic_DNA"/>
</dbReference>
<dbReference type="PIR" id="H75421">
    <property type="entry name" value="H75421"/>
</dbReference>
<dbReference type="RefSeq" id="NP_294938.1">
    <property type="nucleotide sequence ID" value="NC_001263.1"/>
</dbReference>
<dbReference type="RefSeq" id="WP_010887857.1">
    <property type="nucleotide sequence ID" value="NC_001263.1"/>
</dbReference>
<dbReference type="SMR" id="Q9RV16"/>
<dbReference type="FunCoup" id="Q9RV16">
    <property type="interactions" value="234"/>
</dbReference>
<dbReference type="STRING" id="243230.DR_1214"/>
<dbReference type="PaxDb" id="243230-DR_1214"/>
<dbReference type="EnsemblBacteria" id="AAF10787">
    <property type="protein sequence ID" value="AAF10787"/>
    <property type="gene ID" value="DR_1214"/>
</dbReference>
<dbReference type="GeneID" id="69517460"/>
<dbReference type="KEGG" id="dra:DR_1214"/>
<dbReference type="PATRIC" id="fig|243230.17.peg.1413"/>
<dbReference type="eggNOG" id="COG0825">
    <property type="taxonomic scope" value="Bacteria"/>
</dbReference>
<dbReference type="HOGENOM" id="CLU_015486_0_2_0"/>
<dbReference type="InParanoid" id="Q9RV16"/>
<dbReference type="OrthoDB" id="9808023at2"/>
<dbReference type="UniPathway" id="UPA00655">
    <property type="reaction ID" value="UER00711"/>
</dbReference>
<dbReference type="Proteomes" id="UP000002524">
    <property type="component" value="Chromosome 1"/>
</dbReference>
<dbReference type="GO" id="GO:0009317">
    <property type="term" value="C:acetyl-CoA carboxylase complex"/>
    <property type="evidence" value="ECO:0007669"/>
    <property type="project" value="InterPro"/>
</dbReference>
<dbReference type="GO" id="GO:0003989">
    <property type="term" value="F:acetyl-CoA carboxylase activity"/>
    <property type="evidence" value="ECO:0007669"/>
    <property type="project" value="InterPro"/>
</dbReference>
<dbReference type="GO" id="GO:0005524">
    <property type="term" value="F:ATP binding"/>
    <property type="evidence" value="ECO:0007669"/>
    <property type="project" value="UniProtKB-KW"/>
</dbReference>
<dbReference type="GO" id="GO:0016743">
    <property type="term" value="F:carboxyl- or carbamoyltransferase activity"/>
    <property type="evidence" value="ECO:0007669"/>
    <property type="project" value="UniProtKB-UniRule"/>
</dbReference>
<dbReference type="GO" id="GO:0006633">
    <property type="term" value="P:fatty acid biosynthetic process"/>
    <property type="evidence" value="ECO:0007669"/>
    <property type="project" value="UniProtKB-KW"/>
</dbReference>
<dbReference type="GO" id="GO:2001295">
    <property type="term" value="P:malonyl-CoA biosynthetic process"/>
    <property type="evidence" value="ECO:0007669"/>
    <property type="project" value="UniProtKB-UniRule"/>
</dbReference>
<dbReference type="Gene3D" id="3.90.226.10">
    <property type="entry name" value="2-enoyl-CoA Hydratase, Chain A, domain 1"/>
    <property type="match status" value="1"/>
</dbReference>
<dbReference type="HAMAP" id="MF_00823">
    <property type="entry name" value="AcetylCoA_CT_alpha"/>
    <property type="match status" value="1"/>
</dbReference>
<dbReference type="InterPro" id="IPR001095">
    <property type="entry name" value="Acetyl_CoA_COase_a_su"/>
</dbReference>
<dbReference type="InterPro" id="IPR029045">
    <property type="entry name" value="ClpP/crotonase-like_dom_sf"/>
</dbReference>
<dbReference type="InterPro" id="IPR011763">
    <property type="entry name" value="COA_CT_C"/>
</dbReference>
<dbReference type="NCBIfam" id="TIGR00513">
    <property type="entry name" value="accA"/>
    <property type="match status" value="1"/>
</dbReference>
<dbReference type="NCBIfam" id="NF041504">
    <property type="entry name" value="AccA_sub"/>
    <property type="match status" value="1"/>
</dbReference>
<dbReference type="NCBIfam" id="NF004344">
    <property type="entry name" value="PRK05724.1"/>
    <property type="match status" value="1"/>
</dbReference>
<dbReference type="PANTHER" id="PTHR42853">
    <property type="entry name" value="ACETYL-COENZYME A CARBOXYLASE CARBOXYL TRANSFERASE SUBUNIT ALPHA"/>
    <property type="match status" value="1"/>
</dbReference>
<dbReference type="PANTHER" id="PTHR42853:SF3">
    <property type="entry name" value="ACETYL-COENZYME A CARBOXYLASE CARBOXYL TRANSFERASE SUBUNIT ALPHA, CHLOROPLASTIC"/>
    <property type="match status" value="1"/>
</dbReference>
<dbReference type="Pfam" id="PF03255">
    <property type="entry name" value="ACCA"/>
    <property type="match status" value="1"/>
</dbReference>
<dbReference type="PRINTS" id="PR01069">
    <property type="entry name" value="ACCCTRFRASEA"/>
</dbReference>
<dbReference type="SUPFAM" id="SSF52096">
    <property type="entry name" value="ClpP/crotonase"/>
    <property type="match status" value="1"/>
</dbReference>
<dbReference type="PROSITE" id="PS50989">
    <property type="entry name" value="COA_CT_CTER"/>
    <property type="match status" value="1"/>
</dbReference>
<evidence type="ECO:0000255" key="1">
    <source>
        <dbReference type="HAMAP-Rule" id="MF_00823"/>
    </source>
</evidence>
<evidence type="ECO:0000255" key="2">
    <source>
        <dbReference type="PROSITE-ProRule" id="PRU01137"/>
    </source>
</evidence>
<name>ACCA_DEIRA</name>
<organism>
    <name type="scientific">Deinococcus radiodurans (strain ATCC 13939 / DSM 20539 / JCM 16871 / CCUG 27074 / LMG 4051 / NBRC 15346 / NCIMB 9279 / VKM B-1422 / R1)</name>
    <dbReference type="NCBI Taxonomy" id="243230"/>
    <lineage>
        <taxon>Bacteria</taxon>
        <taxon>Thermotogati</taxon>
        <taxon>Deinococcota</taxon>
        <taxon>Deinococci</taxon>
        <taxon>Deinococcales</taxon>
        <taxon>Deinococcaceae</taxon>
        <taxon>Deinococcus</taxon>
    </lineage>
</organism>
<accession>Q9RV16</accession>
<protein>
    <recommendedName>
        <fullName evidence="1">Acetyl-coenzyme A carboxylase carboxyl transferase subunit alpha</fullName>
        <shortName evidence="1">ACCase subunit alpha</shortName>
        <shortName evidence="1">Acetyl-CoA carboxylase carboxyltransferase subunit alpha</shortName>
        <ecNumber evidence="1">2.1.3.15</ecNumber>
    </recommendedName>
</protein>
<gene>
    <name evidence="1" type="primary">accA</name>
    <name type="ordered locus">DR_1214</name>
</gene>
<proteinExistence type="inferred from homology"/>
<keyword id="KW-0067">ATP-binding</keyword>
<keyword id="KW-0963">Cytoplasm</keyword>
<keyword id="KW-0275">Fatty acid biosynthesis</keyword>
<keyword id="KW-0276">Fatty acid metabolism</keyword>
<keyword id="KW-0444">Lipid biosynthesis</keyword>
<keyword id="KW-0443">Lipid metabolism</keyword>
<keyword id="KW-0547">Nucleotide-binding</keyword>
<keyword id="KW-1185">Reference proteome</keyword>
<keyword id="KW-0808">Transferase</keyword>
<comment type="function">
    <text evidence="1">Component of the acetyl coenzyme A carboxylase (ACC) complex. First, biotin carboxylase catalyzes the carboxylation of biotin on its carrier protein (BCCP) and then the CO(2) group is transferred by the carboxyltransferase to acetyl-CoA to form malonyl-CoA.</text>
</comment>
<comment type="catalytic activity">
    <reaction evidence="1">
        <text>N(6)-carboxybiotinyl-L-lysyl-[protein] + acetyl-CoA = N(6)-biotinyl-L-lysyl-[protein] + malonyl-CoA</text>
        <dbReference type="Rhea" id="RHEA:54728"/>
        <dbReference type="Rhea" id="RHEA-COMP:10505"/>
        <dbReference type="Rhea" id="RHEA-COMP:10506"/>
        <dbReference type="ChEBI" id="CHEBI:57288"/>
        <dbReference type="ChEBI" id="CHEBI:57384"/>
        <dbReference type="ChEBI" id="CHEBI:83144"/>
        <dbReference type="ChEBI" id="CHEBI:83145"/>
        <dbReference type="EC" id="2.1.3.15"/>
    </reaction>
</comment>
<comment type="pathway">
    <text evidence="1">Lipid metabolism; malonyl-CoA biosynthesis; malonyl-CoA from acetyl-CoA: step 1/1.</text>
</comment>
<comment type="subunit">
    <text evidence="1">Acetyl-CoA carboxylase is a heterohexamer composed of biotin carboxyl carrier protein (AccB), biotin carboxylase (AccC) and two subunits each of ACCase subunit alpha (AccA) and ACCase subunit beta (AccD).</text>
</comment>
<comment type="subcellular location">
    <subcellularLocation>
        <location evidence="1">Cytoplasm</location>
    </subcellularLocation>
</comment>
<comment type="similarity">
    <text evidence="1">Belongs to the AccA family.</text>
</comment>